<accession>Q6GB66</accession>
<sequence length="311" mass="33616">MTEIDFDIAIIGAGPAGMTAAVYASRANLKTVMIERGIPGGQMANTEEVENFPGFEMITGPDLSTKMFEHAKKFGAVYQYGDIKSVEDKGEYKVINFGNKELTAKAVIIATGAEYKKIGVPGEQELGGRGVSYCAVCDGAFFKNKRLFVIGGGDSAVEEGTFLTKFADKVTIVHRRDELRAQRILQDRAFKNDKIDFIWSHTLKSINEKDGKVGSVTLTSTKDGSEETHEADGVFIYIGMKPLTAPFKDLGITNDVGYIVTKDDMTTSVPGIFAAGDVRDKGLRQIVTATGDGSIAAQSAAEYIEHLNDQA</sequence>
<evidence type="ECO:0000250" key="1"/>
<evidence type="ECO:0000250" key="2">
    <source>
        <dbReference type="UniProtKB" id="P0A9P4"/>
    </source>
</evidence>
<evidence type="ECO:0000305" key="3"/>
<dbReference type="EC" id="1.8.1.9"/>
<dbReference type="EMBL" id="BX571857">
    <property type="protein sequence ID" value="CAG42505.1"/>
    <property type="molecule type" value="Genomic_DNA"/>
</dbReference>
<dbReference type="RefSeq" id="WP_000134963.1">
    <property type="nucleotide sequence ID" value="NC_002953.3"/>
</dbReference>
<dbReference type="SMR" id="Q6GB66"/>
<dbReference type="KEGG" id="sas:SAS0729"/>
<dbReference type="HOGENOM" id="CLU_031864_5_1_9"/>
<dbReference type="GO" id="GO:0005737">
    <property type="term" value="C:cytoplasm"/>
    <property type="evidence" value="ECO:0007669"/>
    <property type="project" value="UniProtKB-SubCell"/>
</dbReference>
<dbReference type="GO" id="GO:0004791">
    <property type="term" value="F:thioredoxin-disulfide reductase (NADPH) activity"/>
    <property type="evidence" value="ECO:0007669"/>
    <property type="project" value="UniProtKB-EC"/>
</dbReference>
<dbReference type="GO" id="GO:0019430">
    <property type="term" value="P:removal of superoxide radicals"/>
    <property type="evidence" value="ECO:0007669"/>
    <property type="project" value="InterPro"/>
</dbReference>
<dbReference type="Gene3D" id="3.50.50.60">
    <property type="entry name" value="FAD/NAD(P)-binding domain"/>
    <property type="match status" value="2"/>
</dbReference>
<dbReference type="InterPro" id="IPR036188">
    <property type="entry name" value="FAD/NAD-bd_sf"/>
</dbReference>
<dbReference type="InterPro" id="IPR023753">
    <property type="entry name" value="FAD/NAD-binding_dom"/>
</dbReference>
<dbReference type="InterPro" id="IPR050097">
    <property type="entry name" value="Ferredoxin-NADP_redctase_2"/>
</dbReference>
<dbReference type="InterPro" id="IPR008255">
    <property type="entry name" value="Pyr_nucl-diS_OxRdtase_2_AS"/>
</dbReference>
<dbReference type="InterPro" id="IPR005982">
    <property type="entry name" value="Thioredox_Rdtase"/>
</dbReference>
<dbReference type="NCBIfam" id="TIGR01292">
    <property type="entry name" value="TRX_reduct"/>
    <property type="match status" value="1"/>
</dbReference>
<dbReference type="PANTHER" id="PTHR48105">
    <property type="entry name" value="THIOREDOXIN REDUCTASE 1-RELATED-RELATED"/>
    <property type="match status" value="1"/>
</dbReference>
<dbReference type="Pfam" id="PF07992">
    <property type="entry name" value="Pyr_redox_2"/>
    <property type="match status" value="1"/>
</dbReference>
<dbReference type="PRINTS" id="PR00368">
    <property type="entry name" value="FADPNR"/>
</dbReference>
<dbReference type="PRINTS" id="PR00469">
    <property type="entry name" value="PNDRDTASEII"/>
</dbReference>
<dbReference type="SUPFAM" id="SSF51905">
    <property type="entry name" value="FAD/NAD(P)-binding domain"/>
    <property type="match status" value="1"/>
</dbReference>
<dbReference type="PROSITE" id="PS00573">
    <property type="entry name" value="PYRIDINE_REDOX_2"/>
    <property type="match status" value="1"/>
</dbReference>
<proteinExistence type="inferred from homology"/>
<keyword id="KW-0963">Cytoplasm</keyword>
<keyword id="KW-1015">Disulfide bond</keyword>
<keyword id="KW-0274">FAD</keyword>
<keyword id="KW-0285">Flavoprotein</keyword>
<keyword id="KW-0521">NADP</keyword>
<keyword id="KW-0560">Oxidoreductase</keyword>
<keyword id="KW-0676">Redox-active center</keyword>
<name>TRXB_STAAS</name>
<protein>
    <recommendedName>
        <fullName>Thioredoxin reductase</fullName>
        <shortName>TRXR</shortName>
        <ecNumber>1.8.1.9</ecNumber>
    </recommendedName>
</protein>
<gene>
    <name type="primary">trxB</name>
    <name type="ordered locus">SAS0729</name>
</gene>
<reference key="1">
    <citation type="journal article" date="2004" name="Proc. Natl. Acad. Sci. U.S.A.">
        <title>Complete genomes of two clinical Staphylococcus aureus strains: evidence for the rapid evolution of virulence and drug resistance.</title>
        <authorList>
            <person name="Holden M.T.G."/>
            <person name="Feil E.J."/>
            <person name="Lindsay J.A."/>
            <person name="Peacock S.J."/>
            <person name="Day N.P.J."/>
            <person name="Enright M.C."/>
            <person name="Foster T.J."/>
            <person name="Moore C.E."/>
            <person name="Hurst L."/>
            <person name="Atkin R."/>
            <person name="Barron A."/>
            <person name="Bason N."/>
            <person name="Bentley S.D."/>
            <person name="Chillingworth C."/>
            <person name="Chillingworth T."/>
            <person name="Churcher C."/>
            <person name="Clark L."/>
            <person name="Corton C."/>
            <person name="Cronin A."/>
            <person name="Doggett J."/>
            <person name="Dowd L."/>
            <person name="Feltwell T."/>
            <person name="Hance Z."/>
            <person name="Harris B."/>
            <person name="Hauser H."/>
            <person name="Holroyd S."/>
            <person name="Jagels K."/>
            <person name="James K.D."/>
            <person name="Lennard N."/>
            <person name="Line A."/>
            <person name="Mayes R."/>
            <person name="Moule S."/>
            <person name="Mungall K."/>
            <person name="Ormond D."/>
            <person name="Quail M.A."/>
            <person name="Rabbinowitsch E."/>
            <person name="Rutherford K.M."/>
            <person name="Sanders M."/>
            <person name="Sharp S."/>
            <person name="Simmonds M."/>
            <person name="Stevens K."/>
            <person name="Whitehead S."/>
            <person name="Barrell B.G."/>
            <person name="Spratt B.G."/>
            <person name="Parkhill J."/>
        </authorList>
    </citation>
    <scope>NUCLEOTIDE SEQUENCE [LARGE SCALE GENOMIC DNA]</scope>
    <source>
        <strain>MSSA476</strain>
    </source>
</reference>
<comment type="catalytic activity">
    <reaction>
        <text>[thioredoxin]-dithiol + NADP(+) = [thioredoxin]-disulfide + NADPH + H(+)</text>
        <dbReference type="Rhea" id="RHEA:20345"/>
        <dbReference type="Rhea" id="RHEA-COMP:10698"/>
        <dbReference type="Rhea" id="RHEA-COMP:10700"/>
        <dbReference type="ChEBI" id="CHEBI:15378"/>
        <dbReference type="ChEBI" id="CHEBI:29950"/>
        <dbReference type="ChEBI" id="CHEBI:50058"/>
        <dbReference type="ChEBI" id="CHEBI:57783"/>
        <dbReference type="ChEBI" id="CHEBI:58349"/>
        <dbReference type="EC" id="1.8.1.9"/>
    </reaction>
</comment>
<comment type="cofactor">
    <cofactor evidence="2">
        <name>FAD</name>
        <dbReference type="ChEBI" id="CHEBI:57692"/>
    </cofactor>
    <text evidence="2">Binds 1 FAD per subunit.</text>
</comment>
<comment type="subunit">
    <text evidence="2">Homodimer.</text>
</comment>
<comment type="subcellular location">
    <subcellularLocation>
        <location evidence="1">Cytoplasm</location>
    </subcellularLocation>
</comment>
<comment type="miscellaneous">
    <text>The active site is a redox-active disulfide bond.</text>
</comment>
<comment type="similarity">
    <text evidence="3">Belongs to the class-II pyridine nucleotide-disulfide oxidoreductase family.</text>
</comment>
<organism>
    <name type="scientific">Staphylococcus aureus (strain MSSA476)</name>
    <dbReference type="NCBI Taxonomy" id="282459"/>
    <lineage>
        <taxon>Bacteria</taxon>
        <taxon>Bacillati</taxon>
        <taxon>Bacillota</taxon>
        <taxon>Bacilli</taxon>
        <taxon>Bacillales</taxon>
        <taxon>Staphylococcaceae</taxon>
        <taxon>Staphylococcus</taxon>
    </lineage>
</organism>
<feature type="chain" id="PRO_0000166748" description="Thioredoxin reductase">
    <location>
        <begin position="1"/>
        <end position="311"/>
    </location>
</feature>
<feature type="binding site" evidence="2">
    <location>
        <begin position="35"/>
        <end position="42"/>
    </location>
    <ligand>
        <name>FAD</name>
        <dbReference type="ChEBI" id="CHEBI:57692"/>
    </ligand>
</feature>
<feature type="binding site" evidence="2">
    <location>
        <begin position="277"/>
        <end position="286"/>
    </location>
    <ligand>
        <name>FAD</name>
        <dbReference type="ChEBI" id="CHEBI:57692"/>
    </ligand>
</feature>
<feature type="disulfide bond" description="Redox-active" evidence="2">
    <location>
        <begin position="134"/>
        <end position="137"/>
    </location>
</feature>